<comment type="function">
    <text evidence="1">Small subunit of the glutamine-dependent carbamoyl phosphate synthetase (CPSase). CPSase catalyzes the formation of carbamoyl phosphate from the ammonia moiety of glutamine, carbonate, and phosphate donated by ATP, constituting the first step of 2 biosynthetic pathways, one leading to arginine and/or urea and the other to pyrimidine nucleotides. The small subunit (glutamine amidotransferase) binds and cleaves glutamine to supply the large subunit with the substrate ammonia.</text>
</comment>
<comment type="catalytic activity">
    <reaction evidence="1">
        <text>hydrogencarbonate + L-glutamine + 2 ATP + H2O = carbamoyl phosphate + L-glutamate + 2 ADP + phosphate + 2 H(+)</text>
        <dbReference type="Rhea" id="RHEA:18633"/>
        <dbReference type="ChEBI" id="CHEBI:15377"/>
        <dbReference type="ChEBI" id="CHEBI:15378"/>
        <dbReference type="ChEBI" id="CHEBI:17544"/>
        <dbReference type="ChEBI" id="CHEBI:29985"/>
        <dbReference type="ChEBI" id="CHEBI:30616"/>
        <dbReference type="ChEBI" id="CHEBI:43474"/>
        <dbReference type="ChEBI" id="CHEBI:58228"/>
        <dbReference type="ChEBI" id="CHEBI:58359"/>
        <dbReference type="ChEBI" id="CHEBI:456216"/>
        <dbReference type="EC" id="6.3.5.5"/>
    </reaction>
</comment>
<comment type="catalytic activity">
    <molecule>Carbamoyl phosphate synthase small chain</molecule>
    <reaction evidence="1">
        <text>L-glutamine + H2O = L-glutamate + NH4(+)</text>
        <dbReference type="Rhea" id="RHEA:15889"/>
        <dbReference type="ChEBI" id="CHEBI:15377"/>
        <dbReference type="ChEBI" id="CHEBI:28938"/>
        <dbReference type="ChEBI" id="CHEBI:29985"/>
        <dbReference type="ChEBI" id="CHEBI:58359"/>
    </reaction>
</comment>
<comment type="pathway">
    <text evidence="1">Amino-acid biosynthesis; L-arginine biosynthesis; carbamoyl phosphate from bicarbonate: step 1/1.</text>
</comment>
<comment type="pathway">
    <text evidence="1">Pyrimidine metabolism; UMP biosynthesis via de novo pathway; (S)-dihydroorotate from bicarbonate: step 1/3.</text>
</comment>
<comment type="subunit">
    <text evidence="1">Composed of two chains; the small (or glutamine) chain promotes the hydrolysis of glutamine to ammonia, which is used by the large (or ammonia) chain to synthesize carbamoyl phosphate. Tetramer of heterodimers (alpha,beta)4.</text>
</comment>
<comment type="similarity">
    <text evidence="1">Belongs to the CarA family.</text>
</comment>
<comment type="sequence caution" evidence="2">
    <conflict type="erroneous initiation">
        <sequence resource="EMBL-CDS" id="AAN78538"/>
    </conflict>
</comment>
<feature type="chain" id="PRO_0000112276" description="Carbamoyl phosphate synthase small chain">
    <location>
        <begin position="1"/>
        <end position="382"/>
    </location>
</feature>
<feature type="domain" description="Glutamine amidotransferase type-1" evidence="1">
    <location>
        <begin position="193"/>
        <end position="380"/>
    </location>
</feature>
<feature type="region of interest" description="CPSase" evidence="1">
    <location>
        <begin position="1"/>
        <end position="189"/>
    </location>
</feature>
<feature type="active site" description="Nucleophile" evidence="1">
    <location>
        <position position="269"/>
    </location>
</feature>
<feature type="active site" evidence="1">
    <location>
        <position position="353"/>
    </location>
</feature>
<feature type="active site" evidence="1">
    <location>
        <position position="355"/>
    </location>
</feature>
<feature type="binding site" evidence="1">
    <location>
        <position position="47"/>
    </location>
    <ligand>
        <name>L-glutamine</name>
        <dbReference type="ChEBI" id="CHEBI:58359"/>
    </ligand>
</feature>
<feature type="binding site" evidence="1">
    <location>
        <position position="241"/>
    </location>
    <ligand>
        <name>L-glutamine</name>
        <dbReference type="ChEBI" id="CHEBI:58359"/>
    </ligand>
</feature>
<feature type="binding site" evidence="1">
    <location>
        <position position="243"/>
    </location>
    <ligand>
        <name>L-glutamine</name>
        <dbReference type="ChEBI" id="CHEBI:58359"/>
    </ligand>
</feature>
<feature type="binding site" evidence="1">
    <location>
        <position position="270"/>
    </location>
    <ligand>
        <name>L-glutamine</name>
        <dbReference type="ChEBI" id="CHEBI:58359"/>
    </ligand>
</feature>
<feature type="binding site" evidence="1">
    <location>
        <position position="273"/>
    </location>
    <ligand>
        <name>L-glutamine</name>
        <dbReference type="ChEBI" id="CHEBI:58359"/>
    </ligand>
</feature>
<feature type="binding site" evidence="1">
    <location>
        <position position="311"/>
    </location>
    <ligand>
        <name>L-glutamine</name>
        <dbReference type="ChEBI" id="CHEBI:58359"/>
    </ligand>
</feature>
<feature type="binding site" evidence="1">
    <location>
        <position position="313"/>
    </location>
    <ligand>
        <name>L-glutamine</name>
        <dbReference type="ChEBI" id="CHEBI:58359"/>
    </ligand>
</feature>
<feature type="binding site" evidence="1">
    <location>
        <position position="314"/>
    </location>
    <ligand>
        <name>L-glutamine</name>
        <dbReference type="ChEBI" id="CHEBI:58359"/>
    </ligand>
</feature>
<evidence type="ECO:0000255" key="1">
    <source>
        <dbReference type="HAMAP-Rule" id="MF_01209"/>
    </source>
</evidence>
<evidence type="ECO:0000305" key="2"/>
<keyword id="KW-0028">Amino-acid biosynthesis</keyword>
<keyword id="KW-0055">Arginine biosynthesis</keyword>
<keyword id="KW-0067">ATP-binding</keyword>
<keyword id="KW-0315">Glutamine amidotransferase</keyword>
<keyword id="KW-0436">Ligase</keyword>
<keyword id="KW-0547">Nucleotide-binding</keyword>
<keyword id="KW-0665">Pyrimidine biosynthesis</keyword>
<keyword id="KW-1185">Reference proteome</keyword>
<sequence>MIKSALLVLEDGTQFHGRAIGATGSAVGEVVFNTSMTGYQEILTDPSYSRQIVTLTYPHIGNVGTNDADEESSQVHAQGLVIRDLPLIASNFRNTEDLSSYLKRHNIVAIADIDTRKLTRLLREKGAQNGCIIAGDNPDAALALEKARAFPGLNGMDLAKEVTTAEPYSWTQGSWTLTGGLPEAKKEDELPYHVVAYDFGAKRNILRMLVDRGCRLTIVPAQTSAEDVLKMNPDGIFLSNGPGDPAPCDYAITAIQKFLETDIPVFGICLGHQLLALASGAKTVKMKFGHHGGNHPVKDVEKNVVMITAQNHGFAVDEATLPANLRVTHKSLFDGTLQGIHRTDKPAFSFQGHPEASPGPHDAAPLFDHFIALIEQYRKTAK</sequence>
<protein>
    <recommendedName>
        <fullName evidence="1">Carbamoyl phosphate synthase small chain</fullName>
        <ecNumber evidence="1">6.3.5.5</ecNumber>
    </recommendedName>
    <alternativeName>
        <fullName evidence="1">Carbamoyl phosphate synthetase glutamine chain</fullName>
    </alternativeName>
</protein>
<organism>
    <name type="scientific">Escherichia coli O6:H1 (strain CFT073 / ATCC 700928 / UPEC)</name>
    <dbReference type="NCBI Taxonomy" id="199310"/>
    <lineage>
        <taxon>Bacteria</taxon>
        <taxon>Pseudomonadati</taxon>
        <taxon>Pseudomonadota</taxon>
        <taxon>Gammaproteobacteria</taxon>
        <taxon>Enterobacterales</taxon>
        <taxon>Enterobacteriaceae</taxon>
        <taxon>Escherichia</taxon>
    </lineage>
</organism>
<gene>
    <name evidence="1" type="primary">carA</name>
    <name type="ordered locus">c0040</name>
</gene>
<dbReference type="EC" id="6.3.5.5" evidence="1"/>
<dbReference type="EMBL" id="AE014075">
    <property type="protein sequence ID" value="AAN78538.1"/>
    <property type="status" value="ALT_INIT"/>
    <property type="molecule type" value="Genomic_DNA"/>
</dbReference>
<dbReference type="RefSeq" id="WP_001295757.1">
    <property type="nucleotide sequence ID" value="NZ_CP051263.1"/>
</dbReference>
<dbReference type="SMR" id="Q8FLB1"/>
<dbReference type="STRING" id="199310.c0040"/>
<dbReference type="KEGG" id="ecc:c0040"/>
<dbReference type="eggNOG" id="COG0505">
    <property type="taxonomic scope" value="Bacteria"/>
</dbReference>
<dbReference type="HOGENOM" id="CLU_035901_1_1_6"/>
<dbReference type="UniPathway" id="UPA00068">
    <property type="reaction ID" value="UER00171"/>
</dbReference>
<dbReference type="UniPathway" id="UPA00070">
    <property type="reaction ID" value="UER00115"/>
</dbReference>
<dbReference type="Proteomes" id="UP000001410">
    <property type="component" value="Chromosome"/>
</dbReference>
<dbReference type="GO" id="GO:0005524">
    <property type="term" value="F:ATP binding"/>
    <property type="evidence" value="ECO:0007669"/>
    <property type="project" value="UniProtKB-UniRule"/>
</dbReference>
<dbReference type="GO" id="GO:0004088">
    <property type="term" value="F:carbamoyl-phosphate synthase (glutamine-hydrolyzing) activity"/>
    <property type="evidence" value="ECO:0007669"/>
    <property type="project" value="UniProtKB-UniRule"/>
</dbReference>
<dbReference type="GO" id="GO:0004359">
    <property type="term" value="F:glutaminase activity"/>
    <property type="evidence" value="ECO:0007669"/>
    <property type="project" value="RHEA"/>
</dbReference>
<dbReference type="GO" id="GO:0006207">
    <property type="term" value="P:'de novo' pyrimidine nucleobase biosynthetic process"/>
    <property type="evidence" value="ECO:0007669"/>
    <property type="project" value="InterPro"/>
</dbReference>
<dbReference type="GO" id="GO:0044205">
    <property type="term" value="P:'de novo' UMP biosynthetic process"/>
    <property type="evidence" value="ECO:0007669"/>
    <property type="project" value="UniProtKB-UniRule"/>
</dbReference>
<dbReference type="GO" id="GO:0006541">
    <property type="term" value="P:glutamine metabolic process"/>
    <property type="evidence" value="ECO:0007669"/>
    <property type="project" value="InterPro"/>
</dbReference>
<dbReference type="GO" id="GO:0006526">
    <property type="term" value="P:L-arginine biosynthetic process"/>
    <property type="evidence" value="ECO:0007669"/>
    <property type="project" value="UniProtKB-UniRule"/>
</dbReference>
<dbReference type="CDD" id="cd01744">
    <property type="entry name" value="GATase1_CPSase"/>
    <property type="match status" value="1"/>
</dbReference>
<dbReference type="FunFam" id="3.40.50.880:FF:000011">
    <property type="entry name" value="Carbamoyl-phosphate synthase small chain"/>
    <property type="match status" value="1"/>
</dbReference>
<dbReference type="FunFam" id="3.50.30.20:FF:000001">
    <property type="entry name" value="Carbamoyl-phosphate synthase small chain"/>
    <property type="match status" value="1"/>
</dbReference>
<dbReference type="Gene3D" id="3.40.50.880">
    <property type="match status" value="1"/>
</dbReference>
<dbReference type="Gene3D" id="3.50.30.20">
    <property type="entry name" value="Carbamoyl-phosphate synthase small subunit, N-terminal domain"/>
    <property type="match status" value="1"/>
</dbReference>
<dbReference type="HAMAP" id="MF_01209">
    <property type="entry name" value="CPSase_S_chain"/>
    <property type="match status" value="1"/>
</dbReference>
<dbReference type="InterPro" id="IPR050472">
    <property type="entry name" value="Anth_synth/Amidotransfase"/>
</dbReference>
<dbReference type="InterPro" id="IPR006274">
    <property type="entry name" value="CarbamoylP_synth_ssu"/>
</dbReference>
<dbReference type="InterPro" id="IPR002474">
    <property type="entry name" value="CarbamoylP_synth_ssu_N"/>
</dbReference>
<dbReference type="InterPro" id="IPR036480">
    <property type="entry name" value="CarbP_synth_ssu_N_sf"/>
</dbReference>
<dbReference type="InterPro" id="IPR029062">
    <property type="entry name" value="Class_I_gatase-like"/>
</dbReference>
<dbReference type="InterPro" id="IPR035686">
    <property type="entry name" value="CPSase_GATase1"/>
</dbReference>
<dbReference type="InterPro" id="IPR017926">
    <property type="entry name" value="GATASE"/>
</dbReference>
<dbReference type="NCBIfam" id="TIGR01368">
    <property type="entry name" value="CPSaseIIsmall"/>
    <property type="match status" value="1"/>
</dbReference>
<dbReference type="NCBIfam" id="NF009475">
    <property type="entry name" value="PRK12838.1"/>
    <property type="match status" value="1"/>
</dbReference>
<dbReference type="PANTHER" id="PTHR43418:SF7">
    <property type="entry name" value="CARBAMOYL-PHOSPHATE SYNTHASE SMALL CHAIN"/>
    <property type="match status" value="1"/>
</dbReference>
<dbReference type="PANTHER" id="PTHR43418">
    <property type="entry name" value="MULTIFUNCTIONAL TRYPTOPHAN BIOSYNTHESIS PROTEIN-RELATED"/>
    <property type="match status" value="1"/>
</dbReference>
<dbReference type="Pfam" id="PF00988">
    <property type="entry name" value="CPSase_sm_chain"/>
    <property type="match status" value="1"/>
</dbReference>
<dbReference type="Pfam" id="PF00117">
    <property type="entry name" value="GATase"/>
    <property type="match status" value="1"/>
</dbReference>
<dbReference type="PRINTS" id="PR00097">
    <property type="entry name" value="ANTSNTHASEII"/>
</dbReference>
<dbReference type="PRINTS" id="PR00099">
    <property type="entry name" value="CPSGATASE"/>
</dbReference>
<dbReference type="PRINTS" id="PR00096">
    <property type="entry name" value="GATASE"/>
</dbReference>
<dbReference type="SMART" id="SM01097">
    <property type="entry name" value="CPSase_sm_chain"/>
    <property type="match status" value="1"/>
</dbReference>
<dbReference type="SUPFAM" id="SSF52021">
    <property type="entry name" value="Carbamoyl phosphate synthetase, small subunit N-terminal domain"/>
    <property type="match status" value="1"/>
</dbReference>
<dbReference type="SUPFAM" id="SSF52317">
    <property type="entry name" value="Class I glutamine amidotransferase-like"/>
    <property type="match status" value="1"/>
</dbReference>
<dbReference type="PROSITE" id="PS51273">
    <property type="entry name" value="GATASE_TYPE_1"/>
    <property type="match status" value="1"/>
</dbReference>
<proteinExistence type="inferred from homology"/>
<name>CARA_ECOL6</name>
<reference key="1">
    <citation type="journal article" date="2002" name="Proc. Natl. Acad. Sci. U.S.A.">
        <title>Extensive mosaic structure revealed by the complete genome sequence of uropathogenic Escherichia coli.</title>
        <authorList>
            <person name="Welch R.A."/>
            <person name="Burland V."/>
            <person name="Plunkett G. III"/>
            <person name="Redford P."/>
            <person name="Roesch P."/>
            <person name="Rasko D."/>
            <person name="Buckles E.L."/>
            <person name="Liou S.-R."/>
            <person name="Boutin A."/>
            <person name="Hackett J."/>
            <person name="Stroud D."/>
            <person name="Mayhew G.F."/>
            <person name="Rose D.J."/>
            <person name="Zhou S."/>
            <person name="Schwartz D.C."/>
            <person name="Perna N.T."/>
            <person name="Mobley H.L.T."/>
            <person name="Donnenberg M.S."/>
            <person name="Blattner F.R."/>
        </authorList>
    </citation>
    <scope>NUCLEOTIDE SEQUENCE [LARGE SCALE GENOMIC DNA]</scope>
    <source>
        <strain>CFT073 / ATCC 700928 / UPEC</strain>
    </source>
</reference>
<accession>Q8FLB1</accession>